<name>RS17_STAAB</name>
<reference key="1">
    <citation type="journal article" date="2007" name="PLoS ONE">
        <title>Molecular correlates of host specialization in Staphylococcus aureus.</title>
        <authorList>
            <person name="Herron-Olson L."/>
            <person name="Fitzgerald J.R."/>
            <person name="Musser J.M."/>
            <person name="Kapur V."/>
        </authorList>
    </citation>
    <scope>NUCLEOTIDE SEQUENCE [LARGE SCALE GENOMIC DNA]</scope>
    <source>
        <strain>bovine RF122 / ET3-1</strain>
    </source>
</reference>
<sequence length="87" mass="10175">MSERNDRKVYVGKVVSDKMDKTITVLVETYKTHKLYGKRVKYSKKYKTHDENNSAKLGDIVKIQETRPLSATKRFRLVEIVEESVII</sequence>
<organism>
    <name type="scientific">Staphylococcus aureus (strain bovine RF122 / ET3-1)</name>
    <dbReference type="NCBI Taxonomy" id="273036"/>
    <lineage>
        <taxon>Bacteria</taxon>
        <taxon>Bacillati</taxon>
        <taxon>Bacillota</taxon>
        <taxon>Bacilli</taxon>
        <taxon>Bacillales</taxon>
        <taxon>Staphylococcaceae</taxon>
        <taxon>Staphylococcus</taxon>
    </lineage>
</organism>
<protein>
    <recommendedName>
        <fullName evidence="1">Small ribosomal subunit protein uS17</fullName>
    </recommendedName>
    <alternativeName>
        <fullName evidence="2">30S ribosomal protein S17</fullName>
    </alternativeName>
</protein>
<comment type="function">
    <text evidence="1">One of the primary rRNA binding proteins, it binds specifically to the 5'-end of 16S ribosomal RNA.</text>
</comment>
<comment type="subunit">
    <text evidence="1">Part of the 30S ribosomal subunit.</text>
</comment>
<comment type="similarity">
    <text evidence="1">Belongs to the universal ribosomal protein uS17 family.</text>
</comment>
<gene>
    <name evidence="1" type="primary">rpsQ</name>
    <name type="ordered locus">SAB2113c</name>
</gene>
<evidence type="ECO:0000255" key="1">
    <source>
        <dbReference type="HAMAP-Rule" id="MF_01345"/>
    </source>
</evidence>
<evidence type="ECO:0000305" key="2"/>
<keyword id="KW-0002">3D-structure</keyword>
<keyword id="KW-0687">Ribonucleoprotein</keyword>
<keyword id="KW-0689">Ribosomal protein</keyword>
<keyword id="KW-0694">RNA-binding</keyword>
<keyword id="KW-0699">rRNA-binding</keyword>
<proteinExistence type="evidence at protein level"/>
<accession>Q2YYK6</accession>
<dbReference type="EMBL" id="AJ938182">
    <property type="protein sequence ID" value="CAI81802.1"/>
    <property type="molecule type" value="Genomic_DNA"/>
</dbReference>
<dbReference type="RefSeq" id="WP_000004086.1">
    <property type="nucleotide sequence ID" value="NC_007622.1"/>
</dbReference>
<dbReference type="PDB" id="6FXC">
    <property type="method" value="EM"/>
    <property type="resolution" value="6.76 A"/>
    <property type="chains" value="Aq/Bq=5-84"/>
</dbReference>
<dbReference type="PDBsum" id="6FXC"/>
<dbReference type="EMDB" id="EMD-3637"/>
<dbReference type="SMR" id="Q2YYK6"/>
<dbReference type="GeneID" id="98346553"/>
<dbReference type="KEGG" id="sab:SAB2113c"/>
<dbReference type="HOGENOM" id="CLU_073626_1_0_9"/>
<dbReference type="GO" id="GO:0022627">
    <property type="term" value="C:cytosolic small ribosomal subunit"/>
    <property type="evidence" value="ECO:0007669"/>
    <property type="project" value="TreeGrafter"/>
</dbReference>
<dbReference type="GO" id="GO:0019843">
    <property type="term" value="F:rRNA binding"/>
    <property type="evidence" value="ECO:0007669"/>
    <property type="project" value="UniProtKB-UniRule"/>
</dbReference>
<dbReference type="GO" id="GO:0003735">
    <property type="term" value="F:structural constituent of ribosome"/>
    <property type="evidence" value="ECO:0007669"/>
    <property type="project" value="InterPro"/>
</dbReference>
<dbReference type="GO" id="GO:0006412">
    <property type="term" value="P:translation"/>
    <property type="evidence" value="ECO:0007669"/>
    <property type="project" value="UniProtKB-UniRule"/>
</dbReference>
<dbReference type="CDD" id="cd00364">
    <property type="entry name" value="Ribosomal_uS17"/>
    <property type="match status" value="1"/>
</dbReference>
<dbReference type="FunFam" id="2.40.50.140:FF:000026">
    <property type="entry name" value="30S ribosomal protein S17"/>
    <property type="match status" value="1"/>
</dbReference>
<dbReference type="Gene3D" id="2.40.50.140">
    <property type="entry name" value="Nucleic acid-binding proteins"/>
    <property type="match status" value="1"/>
</dbReference>
<dbReference type="HAMAP" id="MF_01345_B">
    <property type="entry name" value="Ribosomal_uS17_B"/>
    <property type="match status" value="1"/>
</dbReference>
<dbReference type="InterPro" id="IPR012340">
    <property type="entry name" value="NA-bd_OB-fold"/>
</dbReference>
<dbReference type="InterPro" id="IPR000266">
    <property type="entry name" value="Ribosomal_uS17"/>
</dbReference>
<dbReference type="InterPro" id="IPR019984">
    <property type="entry name" value="Ribosomal_uS17_bact/chlr"/>
</dbReference>
<dbReference type="InterPro" id="IPR019979">
    <property type="entry name" value="Ribosomal_uS17_CS"/>
</dbReference>
<dbReference type="NCBIfam" id="NF004123">
    <property type="entry name" value="PRK05610.1"/>
    <property type="match status" value="1"/>
</dbReference>
<dbReference type="NCBIfam" id="TIGR03635">
    <property type="entry name" value="uS17_bact"/>
    <property type="match status" value="1"/>
</dbReference>
<dbReference type="PANTHER" id="PTHR10744">
    <property type="entry name" value="40S RIBOSOMAL PROTEIN S11 FAMILY MEMBER"/>
    <property type="match status" value="1"/>
</dbReference>
<dbReference type="PANTHER" id="PTHR10744:SF1">
    <property type="entry name" value="SMALL RIBOSOMAL SUBUNIT PROTEIN US17M"/>
    <property type="match status" value="1"/>
</dbReference>
<dbReference type="Pfam" id="PF00366">
    <property type="entry name" value="Ribosomal_S17"/>
    <property type="match status" value="1"/>
</dbReference>
<dbReference type="PRINTS" id="PR00973">
    <property type="entry name" value="RIBOSOMALS17"/>
</dbReference>
<dbReference type="SUPFAM" id="SSF50249">
    <property type="entry name" value="Nucleic acid-binding proteins"/>
    <property type="match status" value="1"/>
</dbReference>
<dbReference type="PROSITE" id="PS00056">
    <property type="entry name" value="RIBOSOMAL_S17"/>
    <property type="match status" value="1"/>
</dbReference>
<feature type="chain" id="PRO_0000233568" description="Small ribosomal subunit protein uS17">
    <location>
        <begin position="1"/>
        <end position="87"/>
    </location>
</feature>